<evidence type="ECO:0000255" key="1">
    <source>
        <dbReference type="HAMAP-Rule" id="MF_01334"/>
    </source>
</evidence>
<evidence type="ECO:0000256" key="2">
    <source>
        <dbReference type="SAM" id="MobiDB-lite"/>
    </source>
</evidence>
<evidence type="ECO:0000305" key="3"/>
<name>RL25_BACP2</name>
<gene>
    <name evidence="1" type="primary">rplY</name>
    <name evidence="1" type="synonym">ctc</name>
    <name type="ordered locus">BPUM_0036</name>
</gene>
<reference key="1">
    <citation type="journal article" date="2007" name="PLoS ONE">
        <title>Paradoxical DNA repair and peroxide resistance gene conservation in Bacillus pumilus SAFR-032.</title>
        <authorList>
            <person name="Gioia J."/>
            <person name="Yerrapragada S."/>
            <person name="Qin X."/>
            <person name="Jiang H."/>
            <person name="Igboeli O.C."/>
            <person name="Muzny D."/>
            <person name="Dugan-Rocha S."/>
            <person name="Ding Y."/>
            <person name="Hawes A."/>
            <person name="Liu W."/>
            <person name="Perez L."/>
            <person name="Kovar C."/>
            <person name="Dinh H."/>
            <person name="Lee S."/>
            <person name="Nazareth L."/>
            <person name="Blyth P."/>
            <person name="Holder M."/>
            <person name="Buhay C."/>
            <person name="Tirumalai M.R."/>
            <person name="Liu Y."/>
            <person name="Dasgupta I."/>
            <person name="Bokhetache L."/>
            <person name="Fujita M."/>
            <person name="Karouia F."/>
            <person name="Eswara Moorthy P."/>
            <person name="Siefert J."/>
            <person name="Uzman A."/>
            <person name="Buzumbo P."/>
            <person name="Verma A."/>
            <person name="Zwiya H."/>
            <person name="McWilliams B.D."/>
            <person name="Olowu A."/>
            <person name="Clinkenbeard K.D."/>
            <person name="Newcombe D."/>
            <person name="Golebiewski L."/>
            <person name="Petrosino J.F."/>
            <person name="Nicholson W.L."/>
            <person name="Fox G.E."/>
            <person name="Venkateswaran K."/>
            <person name="Highlander S.K."/>
            <person name="Weinstock G.M."/>
        </authorList>
    </citation>
    <scope>NUCLEOTIDE SEQUENCE [LARGE SCALE GENOMIC DNA]</scope>
    <source>
        <strain>SAFR-032</strain>
    </source>
</reference>
<keyword id="KW-0687">Ribonucleoprotein</keyword>
<keyword id="KW-0689">Ribosomal protein</keyword>
<keyword id="KW-0694">RNA-binding</keyword>
<keyword id="KW-0699">rRNA-binding</keyword>
<feature type="chain" id="PRO_1000067628" description="Large ribosomal subunit protein bL25">
    <location>
        <begin position="1"/>
        <end position="208"/>
    </location>
</feature>
<feature type="region of interest" description="Disordered" evidence="2">
    <location>
        <begin position="178"/>
        <end position="208"/>
    </location>
</feature>
<feature type="compositionally biased region" description="Acidic residues" evidence="2">
    <location>
        <begin position="186"/>
        <end position="195"/>
    </location>
</feature>
<feature type="compositionally biased region" description="Basic and acidic residues" evidence="2">
    <location>
        <begin position="196"/>
        <end position="208"/>
    </location>
</feature>
<protein>
    <recommendedName>
        <fullName evidence="1">Large ribosomal subunit protein bL25</fullName>
    </recommendedName>
    <alternativeName>
        <fullName evidence="3">50S ribosomal protein L25</fullName>
    </alternativeName>
    <alternativeName>
        <fullName evidence="1">General stress protein CTC</fullName>
    </alternativeName>
</protein>
<comment type="function">
    <text evidence="1">This is one of the proteins that binds to the 5S RNA in the ribosome where it forms part of the central protuberance.</text>
</comment>
<comment type="subunit">
    <text evidence="1">Part of the 50S ribosomal subunit; part of the 5S rRNA/L5/L18/L25 subcomplex. Contacts the 5S rRNA. Binds to the 5S rRNA independently of L5 and L18.</text>
</comment>
<comment type="similarity">
    <text evidence="1">Belongs to the bacterial ribosomal protein bL25 family. CTC subfamily.</text>
</comment>
<dbReference type="EMBL" id="CP000813">
    <property type="protein sequence ID" value="ABV60736.1"/>
    <property type="molecule type" value="Genomic_DNA"/>
</dbReference>
<dbReference type="RefSeq" id="WP_012008657.1">
    <property type="nucleotide sequence ID" value="NZ_VEIS01000022.1"/>
</dbReference>
<dbReference type="SMR" id="A8F919"/>
<dbReference type="STRING" id="315750.BPUM_0036"/>
<dbReference type="GeneID" id="5619273"/>
<dbReference type="KEGG" id="bpu:BPUM_0036"/>
<dbReference type="eggNOG" id="COG1825">
    <property type="taxonomic scope" value="Bacteria"/>
</dbReference>
<dbReference type="HOGENOM" id="CLU_075939_2_0_9"/>
<dbReference type="OrthoDB" id="9790002at2"/>
<dbReference type="Proteomes" id="UP000001355">
    <property type="component" value="Chromosome"/>
</dbReference>
<dbReference type="GO" id="GO:0022625">
    <property type="term" value="C:cytosolic large ribosomal subunit"/>
    <property type="evidence" value="ECO:0007669"/>
    <property type="project" value="TreeGrafter"/>
</dbReference>
<dbReference type="GO" id="GO:0008097">
    <property type="term" value="F:5S rRNA binding"/>
    <property type="evidence" value="ECO:0007669"/>
    <property type="project" value="InterPro"/>
</dbReference>
<dbReference type="GO" id="GO:0003735">
    <property type="term" value="F:structural constituent of ribosome"/>
    <property type="evidence" value="ECO:0007669"/>
    <property type="project" value="InterPro"/>
</dbReference>
<dbReference type="GO" id="GO:0006412">
    <property type="term" value="P:translation"/>
    <property type="evidence" value="ECO:0007669"/>
    <property type="project" value="UniProtKB-UniRule"/>
</dbReference>
<dbReference type="CDD" id="cd00495">
    <property type="entry name" value="Ribosomal_L25_TL5_CTC"/>
    <property type="match status" value="1"/>
</dbReference>
<dbReference type="Gene3D" id="2.170.120.20">
    <property type="entry name" value="Ribosomal protein L25, beta domain"/>
    <property type="match status" value="1"/>
</dbReference>
<dbReference type="Gene3D" id="2.40.240.10">
    <property type="entry name" value="Ribosomal Protein L25, Chain P"/>
    <property type="match status" value="1"/>
</dbReference>
<dbReference type="HAMAP" id="MF_01334">
    <property type="entry name" value="Ribosomal_bL25_CTC"/>
    <property type="match status" value="1"/>
</dbReference>
<dbReference type="InterPro" id="IPR020056">
    <property type="entry name" value="Rbsml_bL25/Gln-tRNA_synth_N"/>
</dbReference>
<dbReference type="InterPro" id="IPR011035">
    <property type="entry name" value="Ribosomal_bL25/Gln-tRNA_synth"/>
</dbReference>
<dbReference type="InterPro" id="IPR020057">
    <property type="entry name" value="Ribosomal_bL25_b-dom"/>
</dbReference>
<dbReference type="InterPro" id="IPR037121">
    <property type="entry name" value="Ribosomal_bL25_C"/>
</dbReference>
<dbReference type="InterPro" id="IPR001021">
    <property type="entry name" value="Ribosomal_bL25_long"/>
</dbReference>
<dbReference type="InterPro" id="IPR029751">
    <property type="entry name" value="Ribosomal_L25_dom"/>
</dbReference>
<dbReference type="InterPro" id="IPR020930">
    <property type="entry name" value="Ribosomal_uL5_bac-type"/>
</dbReference>
<dbReference type="NCBIfam" id="TIGR00731">
    <property type="entry name" value="bL25_bact_ctc"/>
    <property type="match status" value="1"/>
</dbReference>
<dbReference type="NCBIfam" id="NF004133">
    <property type="entry name" value="PRK05618.2-4"/>
    <property type="match status" value="1"/>
</dbReference>
<dbReference type="PANTHER" id="PTHR33284">
    <property type="entry name" value="RIBOSOMAL PROTEIN L25/GLN-TRNA SYNTHETASE, ANTI-CODON-BINDING DOMAIN-CONTAINING PROTEIN"/>
    <property type="match status" value="1"/>
</dbReference>
<dbReference type="PANTHER" id="PTHR33284:SF1">
    <property type="entry name" value="RIBOSOMAL PROTEIN L25_GLN-TRNA SYNTHETASE, ANTI-CODON-BINDING DOMAIN-CONTAINING PROTEIN"/>
    <property type="match status" value="1"/>
</dbReference>
<dbReference type="Pfam" id="PF01386">
    <property type="entry name" value="Ribosomal_L25p"/>
    <property type="match status" value="1"/>
</dbReference>
<dbReference type="Pfam" id="PF14693">
    <property type="entry name" value="Ribosomal_TL5_C"/>
    <property type="match status" value="1"/>
</dbReference>
<dbReference type="SUPFAM" id="SSF50715">
    <property type="entry name" value="Ribosomal protein L25-like"/>
    <property type="match status" value="1"/>
</dbReference>
<sequence>MATLKANKRTDFKRSTLQKIRHSGHVPGVIYGKNTDNLAVSLDSIDLLKTLRDEGKNTIITLDVNGETKSVMVTELQTDPLKNELVHADFQVVDLQREIEADVPVQLIGESKGVKDGGVLQQPLFELSITAKPKDIPQHIEADITNLEVNDVLTVADLPVQSSYQVNNDPEEVVASILPPQQSEVPEPDSEEEPKEPEAIKEKDNDGE</sequence>
<accession>A8F919</accession>
<proteinExistence type="inferred from homology"/>
<organism>
    <name type="scientific">Bacillus pumilus (strain SAFR-032)</name>
    <dbReference type="NCBI Taxonomy" id="315750"/>
    <lineage>
        <taxon>Bacteria</taxon>
        <taxon>Bacillati</taxon>
        <taxon>Bacillota</taxon>
        <taxon>Bacilli</taxon>
        <taxon>Bacillales</taxon>
        <taxon>Bacillaceae</taxon>
        <taxon>Bacillus</taxon>
    </lineage>
</organism>